<protein>
    <recommendedName>
        <fullName evidence="1">Small ribosomal subunit protein bS21</fullName>
    </recommendedName>
    <alternativeName>
        <fullName evidence="3">30S ribosomal protein S21</fullName>
    </alternativeName>
</protein>
<dbReference type="EMBL" id="CP000712">
    <property type="protein sequence ID" value="ABQ76593.1"/>
    <property type="molecule type" value="Genomic_DNA"/>
</dbReference>
<dbReference type="SMR" id="A5VXI3"/>
<dbReference type="KEGG" id="ppf:Pput_0423"/>
<dbReference type="eggNOG" id="COG0828">
    <property type="taxonomic scope" value="Bacteria"/>
</dbReference>
<dbReference type="HOGENOM" id="CLU_159258_1_0_6"/>
<dbReference type="GO" id="GO:1990904">
    <property type="term" value="C:ribonucleoprotein complex"/>
    <property type="evidence" value="ECO:0007669"/>
    <property type="project" value="UniProtKB-KW"/>
</dbReference>
<dbReference type="GO" id="GO:0005840">
    <property type="term" value="C:ribosome"/>
    <property type="evidence" value="ECO:0007669"/>
    <property type="project" value="UniProtKB-KW"/>
</dbReference>
<dbReference type="GO" id="GO:0003735">
    <property type="term" value="F:structural constituent of ribosome"/>
    <property type="evidence" value="ECO:0007669"/>
    <property type="project" value="InterPro"/>
</dbReference>
<dbReference type="GO" id="GO:0006412">
    <property type="term" value="P:translation"/>
    <property type="evidence" value="ECO:0007669"/>
    <property type="project" value="UniProtKB-UniRule"/>
</dbReference>
<dbReference type="Gene3D" id="1.20.5.1150">
    <property type="entry name" value="Ribosomal protein S8"/>
    <property type="match status" value="1"/>
</dbReference>
<dbReference type="HAMAP" id="MF_00358">
    <property type="entry name" value="Ribosomal_bS21"/>
    <property type="match status" value="1"/>
</dbReference>
<dbReference type="InterPro" id="IPR001911">
    <property type="entry name" value="Ribosomal_bS21"/>
</dbReference>
<dbReference type="InterPro" id="IPR018278">
    <property type="entry name" value="Ribosomal_bS21_CS"/>
</dbReference>
<dbReference type="InterPro" id="IPR038380">
    <property type="entry name" value="Ribosomal_bS21_sf"/>
</dbReference>
<dbReference type="NCBIfam" id="TIGR00030">
    <property type="entry name" value="S21p"/>
    <property type="match status" value="1"/>
</dbReference>
<dbReference type="PANTHER" id="PTHR21109">
    <property type="entry name" value="MITOCHONDRIAL 28S RIBOSOMAL PROTEIN S21"/>
    <property type="match status" value="1"/>
</dbReference>
<dbReference type="PANTHER" id="PTHR21109:SF22">
    <property type="entry name" value="SMALL RIBOSOMAL SUBUNIT PROTEIN BS21"/>
    <property type="match status" value="1"/>
</dbReference>
<dbReference type="Pfam" id="PF01165">
    <property type="entry name" value="Ribosomal_S21"/>
    <property type="match status" value="1"/>
</dbReference>
<dbReference type="PRINTS" id="PR00976">
    <property type="entry name" value="RIBOSOMALS21"/>
</dbReference>
<dbReference type="PROSITE" id="PS01181">
    <property type="entry name" value="RIBOSOMAL_S21"/>
    <property type="match status" value="1"/>
</dbReference>
<sequence length="71" mass="8370">MPAVKVKENEPFDVALRRFKRSCEKAGVLAEVRSREFYEKPTAERKRKAAAAVKRHAKKVQREQRRAVRLY</sequence>
<accession>A5VXI3</accession>
<reference key="1">
    <citation type="submission" date="2007-05" db="EMBL/GenBank/DDBJ databases">
        <title>Complete sequence of Pseudomonas putida F1.</title>
        <authorList>
            <consortium name="US DOE Joint Genome Institute"/>
            <person name="Copeland A."/>
            <person name="Lucas S."/>
            <person name="Lapidus A."/>
            <person name="Barry K."/>
            <person name="Detter J.C."/>
            <person name="Glavina del Rio T."/>
            <person name="Hammon N."/>
            <person name="Israni S."/>
            <person name="Dalin E."/>
            <person name="Tice H."/>
            <person name="Pitluck S."/>
            <person name="Chain P."/>
            <person name="Malfatti S."/>
            <person name="Shin M."/>
            <person name="Vergez L."/>
            <person name="Schmutz J."/>
            <person name="Larimer F."/>
            <person name="Land M."/>
            <person name="Hauser L."/>
            <person name="Kyrpides N."/>
            <person name="Lykidis A."/>
            <person name="Parales R."/>
            <person name="Richardson P."/>
        </authorList>
    </citation>
    <scope>NUCLEOTIDE SEQUENCE [LARGE SCALE GENOMIC DNA]</scope>
    <source>
        <strain>ATCC 700007 / DSM 6899 / JCM 31910 / BCRC 17059 / LMG 24140 / F1</strain>
    </source>
</reference>
<organism>
    <name type="scientific">Pseudomonas putida (strain ATCC 700007 / DSM 6899 / JCM 31910 / BCRC 17059 / LMG 24140 / F1)</name>
    <dbReference type="NCBI Taxonomy" id="351746"/>
    <lineage>
        <taxon>Bacteria</taxon>
        <taxon>Pseudomonadati</taxon>
        <taxon>Pseudomonadota</taxon>
        <taxon>Gammaproteobacteria</taxon>
        <taxon>Pseudomonadales</taxon>
        <taxon>Pseudomonadaceae</taxon>
        <taxon>Pseudomonas</taxon>
    </lineage>
</organism>
<gene>
    <name evidence="1" type="primary">rpsU</name>
    <name type="ordered locus">Pput_0423</name>
</gene>
<feature type="chain" id="PRO_1000005158" description="Small ribosomal subunit protein bS21">
    <location>
        <begin position="1"/>
        <end position="71"/>
    </location>
</feature>
<feature type="region of interest" description="Disordered" evidence="2">
    <location>
        <begin position="50"/>
        <end position="71"/>
    </location>
</feature>
<feature type="compositionally biased region" description="Basic residues" evidence="2">
    <location>
        <begin position="50"/>
        <end position="59"/>
    </location>
</feature>
<feature type="compositionally biased region" description="Basic and acidic residues" evidence="2">
    <location>
        <begin position="60"/>
        <end position="71"/>
    </location>
</feature>
<proteinExistence type="inferred from homology"/>
<name>RS21_PSEP1</name>
<keyword id="KW-0687">Ribonucleoprotein</keyword>
<keyword id="KW-0689">Ribosomal protein</keyword>
<comment type="similarity">
    <text evidence="1">Belongs to the bacterial ribosomal protein bS21 family.</text>
</comment>
<evidence type="ECO:0000255" key="1">
    <source>
        <dbReference type="HAMAP-Rule" id="MF_00358"/>
    </source>
</evidence>
<evidence type="ECO:0000256" key="2">
    <source>
        <dbReference type="SAM" id="MobiDB-lite"/>
    </source>
</evidence>
<evidence type="ECO:0000305" key="3"/>